<proteinExistence type="inferred from homology"/>
<dbReference type="EC" id="4.1.99.22" evidence="1"/>
<dbReference type="EMBL" id="CP000075">
    <property type="protein sequence ID" value="AAY37367.1"/>
    <property type="molecule type" value="Genomic_DNA"/>
</dbReference>
<dbReference type="RefSeq" id="WP_003317890.1">
    <property type="nucleotide sequence ID" value="NC_007005.1"/>
</dbReference>
<dbReference type="RefSeq" id="YP_235405.1">
    <property type="nucleotide sequence ID" value="NC_007005.1"/>
</dbReference>
<dbReference type="SMR" id="Q4ZU05"/>
<dbReference type="STRING" id="205918.Psyr_2327"/>
<dbReference type="GeneID" id="77278160"/>
<dbReference type="KEGG" id="psb:Psyr_2327"/>
<dbReference type="PATRIC" id="fig|205918.7.peg.2381"/>
<dbReference type="eggNOG" id="COG2896">
    <property type="taxonomic scope" value="Bacteria"/>
</dbReference>
<dbReference type="HOGENOM" id="CLU_009273_0_1_6"/>
<dbReference type="OrthoDB" id="9763993at2"/>
<dbReference type="UniPathway" id="UPA00344"/>
<dbReference type="Proteomes" id="UP000000426">
    <property type="component" value="Chromosome"/>
</dbReference>
<dbReference type="GO" id="GO:0051539">
    <property type="term" value="F:4 iron, 4 sulfur cluster binding"/>
    <property type="evidence" value="ECO:0007669"/>
    <property type="project" value="UniProtKB-UniRule"/>
</dbReference>
<dbReference type="GO" id="GO:0061799">
    <property type="term" value="F:cyclic pyranopterin monophosphate synthase activity"/>
    <property type="evidence" value="ECO:0007669"/>
    <property type="project" value="TreeGrafter"/>
</dbReference>
<dbReference type="GO" id="GO:0061798">
    <property type="term" value="F:GTP 3',8'-cyclase activity"/>
    <property type="evidence" value="ECO:0007669"/>
    <property type="project" value="UniProtKB-UniRule"/>
</dbReference>
<dbReference type="GO" id="GO:0005525">
    <property type="term" value="F:GTP binding"/>
    <property type="evidence" value="ECO:0007669"/>
    <property type="project" value="UniProtKB-UniRule"/>
</dbReference>
<dbReference type="GO" id="GO:0046872">
    <property type="term" value="F:metal ion binding"/>
    <property type="evidence" value="ECO:0007669"/>
    <property type="project" value="UniProtKB-KW"/>
</dbReference>
<dbReference type="GO" id="GO:1904047">
    <property type="term" value="F:S-adenosyl-L-methionine binding"/>
    <property type="evidence" value="ECO:0007669"/>
    <property type="project" value="UniProtKB-UniRule"/>
</dbReference>
<dbReference type="GO" id="GO:0006777">
    <property type="term" value="P:Mo-molybdopterin cofactor biosynthetic process"/>
    <property type="evidence" value="ECO:0007669"/>
    <property type="project" value="UniProtKB-UniRule"/>
</dbReference>
<dbReference type="CDD" id="cd01335">
    <property type="entry name" value="Radical_SAM"/>
    <property type="match status" value="1"/>
</dbReference>
<dbReference type="CDD" id="cd21117">
    <property type="entry name" value="Twitch_MoaA"/>
    <property type="match status" value="1"/>
</dbReference>
<dbReference type="Gene3D" id="3.20.20.70">
    <property type="entry name" value="Aldolase class I"/>
    <property type="match status" value="1"/>
</dbReference>
<dbReference type="HAMAP" id="MF_01225_B">
    <property type="entry name" value="MoaA_B"/>
    <property type="match status" value="1"/>
</dbReference>
<dbReference type="InterPro" id="IPR013785">
    <property type="entry name" value="Aldolase_TIM"/>
</dbReference>
<dbReference type="InterPro" id="IPR006638">
    <property type="entry name" value="Elp3/MiaA/NifB-like_rSAM"/>
</dbReference>
<dbReference type="InterPro" id="IPR013483">
    <property type="entry name" value="MoaA"/>
</dbReference>
<dbReference type="InterPro" id="IPR000385">
    <property type="entry name" value="MoaA_NifB_PqqE_Fe-S-bd_CS"/>
</dbReference>
<dbReference type="InterPro" id="IPR010505">
    <property type="entry name" value="MoaA_twitch"/>
</dbReference>
<dbReference type="InterPro" id="IPR050105">
    <property type="entry name" value="MoCo_biosynth_MoaA/MoaC"/>
</dbReference>
<dbReference type="InterPro" id="IPR007197">
    <property type="entry name" value="rSAM"/>
</dbReference>
<dbReference type="NCBIfam" id="TIGR02666">
    <property type="entry name" value="moaA"/>
    <property type="match status" value="1"/>
</dbReference>
<dbReference type="PANTHER" id="PTHR22960:SF0">
    <property type="entry name" value="MOLYBDENUM COFACTOR BIOSYNTHESIS PROTEIN 1"/>
    <property type="match status" value="1"/>
</dbReference>
<dbReference type="PANTHER" id="PTHR22960">
    <property type="entry name" value="MOLYBDOPTERIN COFACTOR SYNTHESIS PROTEIN A"/>
    <property type="match status" value="1"/>
</dbReference>
<dbReference type="Pfam" id="PF13353">
    <property type="entry name" value="Fer4_12"/>
    <property type="match status" value="1"/>
</dbReference>
<dbReference type="Pfam" id="PF06463">
    <property type="entry name" value="Mob_synth_C"/>
    <property type="match status" value="1"/>
</dbReference>
<dbReference type="Pfam" id="PF04055">
    <property type="entry name" value="Radical_SAM"/>
    <property type="match status" value="1"/>
</dbReference>
<dbReference type="SFLD" id="SFLDG01383">
    <property type="entry name" value="cyclic_pyranopterin_phosphate"/>
    <property type="match status" value="1"/>
</dbReference>
<dbReference type="SFLD" id="SFLDG01386">
    <property type="entry name" value="main_SPASM_domain-containing"/>
    <property type="match status" value="1"/>
</dbReference>
<dbReference type="SMART" id="SM00729">
    <property type="entry name" value="Elp3"/>
    <property type="match status" value="1"/>
</dbReference>
<dbReference type="SUPFAM" id="SSF102114">
    <property type="entry name" value="Radical SAM enzymes"/>
    <property type="match status" value="1"/>
</dbReference>
<dbReference type="PROSITE" id="PS01305">
    <property type="entry name" value="MOAA_NIFB_PQQE"/>
    <property type="match status" value="1"/>
</dbReference>
<dbReference type="PROSITE" id="PS51918">
    <property type="entry name" value="RADICAL_SAM"/>
    <property type="match status" value="1"/>
</dbReference>
<organism>
    <name type="scientific">Pseudomonas syringae pv. syringae (strain B728a)</name>
    <dbReference type="NCBI Taxonomy" id="205918"/>
    <lineage>
        <taxon>Bacteria</taxon>
        <taxon>Pseudomonadati</taxon>
        <taxon>Pseudomonadota</taxon>
        <taxon>Gammaproteobacteria</taxon>
        <taxon>Pseudomonadales</taxon>
        <taxon>Pseudomonadaceae</taxon>
        <taxon>Pseudomonas</taxon>
        <taxon>Pseudomonas syringae</taxon>
    </lineage>
</organism>
<sequence>MSEPVLMDRFARKVDYLRMSVTDRCDFRCVYCMAEEMTFLPRQQILSLEEILQVAERFVALGTRKIRLTGGEPLVRAGVVGLCEKIAALPGLRELCMTTNGSQLDKLAAPLFKAGVTRLNISLDSLDPQRFRELTRTGDLHKVIAGIDAANAAGFVHTKLNCVVMHGRNDDEINDLLAFAIDRNLDVSFIEEMPLGIISEHSRAESFYSSDQVRERIAERYTLVPSTDSTQGPSRYWRLAEAPGIRIGFISPHSHNFCGTCNRVRMTVEGRLLLCLGNEHSVDLKAVLRANPGQPEKLEKAIIDAMQLKPWSHNFTHDDGVQVVRFMNMTGG</sequence>
<reference key="1">
    <citation type="journal article" date="2005" name="Proc. Natl. Acad. Sci. U.S.A.">
        <title>Comparison of the complete genome sequences of Pseudomonas syringae pv. syringae B728a and pv. tomato DC3000.</title>
        <authorList>
            <person name="Feil H."/>
            <person name="Feil W.S."/>
            <person name="Chain P."/>
            <person name="Larimer F."/>
            <person name="Dibartolo G."/>
            <person name="Copeland A."/>
            <person name="Lykidis A."/>
            <person name="Trong S."/>
            <person name="Nolan M."/>
            <person name="Goltsman E."/>
            <person name="Thiel J."/>
            <person name="Malfatti S."/>
            <person name="Loper J.E."/>
            <person name="Lapidus A."/>
            <person name="Detter J.C."/>
            <person name="Land M."/>
            <person name="Richardson P.M."/>
            <person name="Kyrpides N.C."/>
            <person name="Ivanova N."/>
            <person name="Lindow S.E."/>
        </authorList>
    </citation>
    <scope>NUCLEOTIDE SEQUENCE [LARGE SCALE GENOMIC DNA]</scope>
    <source>
        <strain>B728a</strain>
    </source>
</reference>
<protein>
    <recommendedName>
        <fullName evidence="1">GTP 3',8-cyclase</fullName>
        <ecNumber evidence="1">4.1.99.22</ecNumber>
    </recommendedName>
    <alternativeName>
        <fullName evidence="1">Molybdenum cofactor biosynthesis protein A</fullName>
    </alternativeName>
</protein>
<gene>
    <name evidence="1" type="primary">moaA</name>
    <name type="ordered locus">Psyr_2327</name>
</gene>
<comment type="function">
    <text evidence="1">Catalyzes the cyclization of GTP to (8S)-3',8-cyclo-7,8-dihydroguanosine 5'-triphosphate.</text>
</comment>
<comment type="catalytic activity">
    <reaction evidence="1">
        <text>GTP + AH2 + S-adenosyl-L-methionine = (8S)-3',8-cyclo-7,8-dihydroguanosine 5'-triphosphate + 5'-deoxyadenosine + L-methionine + A + H(+)</text>
        <dbReference type="Rhea" id="RHEA:49576"/>
        <dbReference type="ChEBI" id="CHEBI:13193"/>
        <dbReference type="ChEBI" id="CHEBI:15378"/>
        <dbReference type="ChEBI" id="CHEBI:17319"/>
        <dbReference type="ChEBI" id="CHEBI:17499"/>
        <dbReference type="ChEBI" id="CHEBI:37565"/>
        <dbReference type="ChEBI" id="CHEBI:57844"/>
        <dbReference type="ChEBI" id="CHEBI:59789"/>
        <dbReference type="ChEBI" id="CHEBI:131766"/>
        <dbReference type="EC" id="4.1.99.22"/>
    </reaction>
</comment>
<comment type="cofactor">
    <cofactor evidence="1">
        <name>[4Fe-4S] cluster</name>
        <dbReference type="ChEBI" id="CHEBI:49883"/>
    </cofactor>
    <text evidence="1">Binds 2 [4Fe-4S] clusters. Binds 1 [4Fe-4S] cluster coordinated with 3 cysteines and an exchangeable S-adenosyl-L-methionine and 1 [4Fe-4S] cluster coordinated with 3 cysteines and the GTP-derived substrate.</text>
</comment>
<comment type="pathway">
    <text evidence="1">Cofactor biosynthesis; molybdopterin biosynthesis.</text>
</comment>
<comment type="subunit">
    <text evidence="1">Monomer and homodimer.</text>
</comment>
<comment type="similarity">
    <text evidence="1">Belongs to the radical SAM superfamily. MoaA family.</text>
</comment>
<feature type="chain" id="PRO_1000054216" description="GTP 3',8-cyclase">
    <location>
        <begin position="1"/>
        <end position="332"/>
    </location>
</feature>
<feature type="domain" description="Radical SAM core" evidence="2">
    <location>
        <begin position="9"/>
        <end position="220"/>
    </location>
</feature>
<feature type="binding site" evidence="1">
    <location>
        <position position="18"/>
    </location>
    <ligand>
        <name>GTP</name>
        <dbReference type="ChEBI" id="CHEBI:37565"/>
    </ligand>
</feature>
<feature type="binding site" evidence="1">
    <location>
        <position position="25"/>
    </location>
    <ligand>
        <name>[4Fe-4S] cluster</name>
        <dbReference type="ChEBI" id="CHEBI:49883"/>
        <label>1</label>
        <note>4Fe-4S-S-AdoMet</note>
    </ligand>
</feature>
<feature type="binding site" evidence="1">
    <location>
        <position position="29"/>
    </location>
    <ligand>
        <name>[4Fe-4S] cluster</name>
        <dbReference type="ChEBI" id="CHEBI:49883"/>
        <label>1</label>
        <note>4Fe-4S-S-AdoMet</note>
    </ligand>
</feature>
<feature type="binding site" evidence="1">
    <location>
        <position position="31"/>
    </location>
    <ligand>
        <name>S-adenosyl-L-methionine</name>
        <dbReference type="ChEBI" id="CHEBI:59789"/>
    </ligand>
</feature>
<feature type="binding site" evidence="1">
    <location>
        <position position="32"/>
    </location>
    <ligand>
        <name>[4Fe-4S] cluster</name>
        <dbReference type="ChEBI" id="CHEBI:49883"/>
        <label>1</label>
        <note>4Fe-4S-S-AdoMet</note>
    </ligand>
</feature>
<feature type="binding site" evidence="1">
    <location>
        <position position="67"/>
    </location>
    <ligand>
        <name>GTP</name>
        <dbReference type="ChEBI" id="CHEBI:37565"/>
    </ligand>
</feature>
<feature type="binding site" evidence="1">
    <location>
        <position position="71"/>
    </location>
    <ligand>
        <name>S-adenosyl-L-methionine</name>
        <dbReference type="ChEBI" id="CHEBI:59789"/>
    </ligand>
</feature>
<feature type="binding site" evidence="1">
    <location>
        <position position="98"/>
    </location>
    <ligand>
        <name>GTP</name>
        <dbReference type="ChEBI" id="CHEBI:37565"/>
    </ligand>
</feature>
<feature type="binding site" evidence="1">
    <location>
        <position position="122"/>
    </location>
    <ligand>
        <name>S-adenosyl-L-methionine</name>
        <dbReference type="ChEBI" id="CHEBI:59789"/>
    </ligand>
</feature>
<feature type="binding site" evidence="1">
    <location>
        <position position="159"/>
    </location>
    <ligand>
        <name>GTP</name>
        <dbReference type="ChEBI" id="CHEBI:37565"/>
    </ligand>
</feature>
<feature type="binding site" evidence="1">
    <location>
        <position position="193"/>
    </location>
    <ligand>
        <name>S-adenosyl-L-methionine</name>
        <dbReference type="ChEBI" id="CHEBI:59789"/>
    </ligand>
</feature>
<feature type="binding site" evidence="1">
    <location>
        <position position="258"/>
    </location>
    <ligand>
        <name>[4Fe-4S] cluster</name>
        <dbReference type="ChEBI" id="CHEBI:49883"/>
        <label>2</label>
        <note>4Fe-4S-substrate</note>
    </ligand>
</feature>
<feature type="binding site" evidence="1">
    <location>
        <position position="261"/>
    </location>
    <ligand>
        <name>[4Fe-4S] cluster</name>
        <dbReference type="ChEBI" id="CHEBI:49883"/>
        <label>2</label>
        <note>4Fe-4S-substrate</note>
    </ligand>
</feature>
<feature type="binding site" evidence="1">
    <location>
        <begin position="263"/>
        <end position="265"/>
    </location>
    <ligand>
        <name>GTP</name>
        <dbReference type="ChEBI" id="CHEBI:37565"/>
    </ligand>
</feature>
<feature type="binding site" evidence="1">
    <location>
        <position position="275"/>
    </location>
    <ligand>
        <name>[4Fe-4S] cluster</name>
        <dbReference type="ChEBI" id="CHEBI:49883"/>
        <label>2</label>
        <note>4Fe-4S-substrate</note>
    </ligand>
</feature>
<name>MOAA_PSEU2</name>
<keyword id="KW-0004">4Fe-4S</keyword>
<keyword id="KW-0342">GTP-binding</keyword>
<keyword id="KW-0408">Iron</keyword>
<keyword id="KW-0411">Iron-sulfur</keyword>
<keyword id="KW-0456">Lyase</keyword>
<keyword id="KW-0479">Metal-binding</keyword>
<keyword id="KW-0501">Molybdenum cofactor biosynthesis</keyword>
<keyword id="KW-0547">Nucleotide-binding</keyword>
<keyword id="KW-0949">S-adenosyl-L-methionine</keyword>
<evidence type="ECO:0000255" key="1">
    <source>
        <dbReference type="HAMAP-Rule" id="MF_01225"/>
    </source>
</evidence>
<evidence type="ECO:0000255" key="2">
    <source>
        <dbReference type="PROSITE-ProRule" id="PRU01266"/>
    </source>
</evidence>
<accession>Q4ZU05</accession>